<protein>
    <recommendedName>
        <fullName evidence="1">Chaperonin GroEL</fullName>
        <ecNumber evidence="1">5.6.1.7</ecNumber>
    </recommendedName>
    <alternativeName>
        <fullName evidence="1">60 kDa chaperonin</fullName>
    </alternativeName>
    <alternativeName>
        <fullName evidence="1">Chaperonin-60</fullName>
        <shortName evidence="1">Cpn60</shortName>
    </alternativeName>
</protein>
<accession>P0C923</accession>
<accession>P27575</accession>
<proteinExistence type="inferred from homology"/>
<comment type="function">
    <text evidence="1">Together with its co-chaperonin GroES, plays an essential role in assisting protein folding. The GroEL-GroES system forms a nano-cage that allows encapsulation of the non-native substrate proteins and provides a physical environment optimized to promote and accelerate protein folding.</text>
</comment>
<comment type="catalytic activity">
    <reaction evidence="1">
        <text>ATP + H2O + a folded polypeptide = ADP + phosphate + an unfolded polypeptide.</text>
        <dbReference type="EC" id="5.6.1.7"/>
    </reaction>
</comment>
<comment type="subunit">
    <text evidence="1">Forms a cylinder of 14 subunits composed of two heptameric rings stacked back-to-back. Interacts with the co-chaperonin GroES.</text>
</comment>
<comment type="subcellular location">
    <subcellularLocation>
        <location evidence="1">Cytoplasm</location>
    </subcellularLocation>
</comment>
<comment type="similarity">
    <text evidence="1">Belongs to the chaperonin (HSP60) family.</text>
</comment>
<name>CH60_BORBU</name>
<feature type="chain" id="PRO_0000063290" description="Chaperonin GroEL">
    <location>
        <begin position="1"/>
        <end position="545"/>
    </location>
</feature>
<feature type="binding site" evidence="1">
    <location>
        <begin position="29"/>
        <end position="32"/>
    </location>
    <ligand>
        <name>ATP</name>
        <dbReference type="ChEBI" id="CHEBI:30616"/>
    </ligand>
</feature>
<feature type="binding site" evidence="1">
    <location>
        <position position="50"/>
    </location>
    <ligand>
        <name>ATP</name>
        <dbReference type="ChEBI" id="CHEBI:30616"/>
    </ligand>
</feature>
<feature type="binding site" evidence="1">
    <location>
        <begin position="86"/>
        <end position="90"/>
    </location>
    <ligand>
        <name>ATP</name>
        <dbReference type="ChEBI" id="CHEBI:30616"/>
    </ligand>
</feature>
<feature type="binding site" evidence="1">
    <location>
        <position position="413"/>
    </location>
    <ligand>
        <name>ATP</name>
        <dbReference type="ChEBI" id="CHEBI:30616"/>
    </ligand>
</feature>
<feature type="binding site" evidence="1">
    <location>
        <position position="495"/>
    </location>
    <ligand>
        <name>ATP</name>
        <dbReference type="ChEBI" id="CHEBI:30616"/>
    </ligand>
</feature>
<feature type="sequence conflict" description="In Ref. 1; CAA37994." evidence="2" ref="1">
    <original>N</original>
    <variation>S</variation>
    <location>
        <position position="124"/>
    </location>
</feature>
<feature type="sequence conflict" description="In Ref. 1; CAA37994." evidence="2" ref="1">
    <original>N</original>
    <variation>S</variation>
    <location>
        <position position="213"/>
    </location>
</feature>
<sequence>MAKDIYFNEDARKSLLSGVEKLSNAVKVTLGPKGRNVLIDKKFGSPTVTKDGVSVAREIELENPFENMGAQLLKEVAIKTNDVAGDGTTTATVLAYAIAREGLKNVSSGINPIGIKKGIDHAVNLAAEKIRQSAKKITTKEEIAQVASISANNDSYIGEKIAEAMDKVGKDGVITVEESKTFDTTISYVEGMQFDRGYLSPYFSTNKENMSVNFDDAFILIYEKKISSIKELLPVLEKVLGTNKPLLIIAEDIEGDALAALVLNSVRGALKVCAIKSPGFGDRRKAMLEDIAVLTGGVLISEELGLTLETVEIEQLGQAKTIKVDKDNTTIINTGNKEQIKERSELIKKQIEDSTSEYDKEKLQERLAKLVGGVAVINVGAVTEVELKEKKHRVEDALSATRAAVEEGVVPGGGSTLIEVAMYLDTIDTSKLSYEEKQGFEIVKRSLEEPMRQIISNAGFEGSIYIHQIKTEKKGLGFDASSFKWVNMIESGIIDPAKVTRSALQNAASIAGLLLTTECAITDIKEEKNTSGGGGYPMDPGMGMM</sequence>
<organism>
    <name type="scientific">Borreliella burgdorferi (strain ATCC 35210 / DSM 4680 / CIP 102532 / B31)</name>
    <name type="common">Borrelia burgdorferi</name>
    <dbReference type="NCBI Taxonomy" id="224326"/>
    <lineage>
        <taxon>Bacteria</taxon>
        <taxon>Pseudomonadati</taxon>
        <taxon>Spirochaetota</taxon>
        <taxon>Spirochaetia</taxon>
        <taxon>Spirochaetales</taxon>
        <taxon>Borreliaceae</taxon>
        <taxon>Borreliella</taxon>
    </lineage>
</organism>
<reference key="1">
    <citation type="journal article" date="1991" name="J. Immunol.">
        <title>T cell and antibody reactivity with the Borrelia burgdorferi 60-kDa heat shock protein in Lyme arthritis.</title>
        <authorList>
            <person name="Hindersson P."/>
            <person name="Hansen K."/>
        </authorList>
    </citation>
    <scope>NUCLEOTIDE SEQUENCE [GENOMIC DNA]</scope>
</reference>
<reference key="2">
    <citation type="journal article" date="1997" name="Nature">
        <title>Genomic sequence of a Lyme disease spirochaete, Borrelia burgdorferi.</title>
        <authorList>
            <person name="Fraser C.M."/>
            <person name="Casjens S."/>
            <person name="Huang W.M."/>
            <person name="Sutton G.G."/>
            <person name="Clayton R.A."/>
            <person name="Lathigra R."/>
            <person name="White O."/>
            <person name="Ketchum K.A."/>
            <person name="Dodson R.J."/>
            <person name="Hickey E.K."/>
            <person name="Gwinn M.L."/>
            <person name="Dougherty B.A."/>
            <person name="Tomb J.-F."/>
            <person name="Fleischmann R.D."/>
            <person name="Richardson D.L."/>
            <person name="Peterson J.D."/>
            <person name="Kerlavage A.R."/>
            <person name="Quackenbush J."/>
            <person name="Salzberg S.L."/>
            <person name="Hanson M."/>
            <person name="van Vugt R."/>
            <person name="Palmer N."/>
            <person name="Adams M.D."/>
            <person name="Gocayne J.D."/>
            <person name="Weidman J.F."/>
            <person name="Utterback T.R."/>
            <person name="Watthey L."/>
            <person name="McDonald L.A."/>
            <person name="Artiach P."/>
            <person name="Bowman C."/>
            <person name="Garland S.A."/>
            <person name="Fujii C."/>
            <person name="Cotton M.D."/>
            <person name="Horst K."/>
            <person name="Roberts K.M."/>
            <person name="Hatch B."/>
            <person name="Smith H.O."/>
            <person name="Venter J.C."/>
        </authorList>
    </citation>
    <scope>NUCLEOTIDE SEQUENCE [LARGE SCALE GENOMIC DNA]</scope>
    <source>
        <strain>ATCC 35210 / DSM 4680 / CIP 102532 / B31</strain>
    </source>
</reference>
<gene>
    <name evidence="1" type="primary">groEL</name>
    <name evidence="1" type="synonym">groL</name>
    <name type="synonym">mopA</name>
    <name type="ordered locus">BB_0649</name>
</gene>
<dbReference type="EC" id="5.6.1.7" evidence="1"/>
<dbReference type="EMBL" id="X54059">
    <property type="protein sequence ID" value="CAA37994.1"/>
    <property type="molecule type" value="Genomic_DNA"/>
</dbReference>
<dbReference type="EMBL" id="AE000783">
    <property type="protein sequence ID" value="AAC66995.1"/>
    <property type="molecule type" value="Genomic_DNA"/>
</dbReference>
<dbReference type="PIR" id="H70180">
    <property type="entry name" value="H70180"/>
</dbReference>
<dbReference type="RefSeq" id="NP_212783.1">
    <property type="nucleotide sequence ID" value="NC_001318.1"/>
</dbReference>
<dbReference type="RefSeq" id="WP_002657108.1">
    <property type="nucleotide sequence ID" value="NC_001318.1"/>
</dbReference>
<dbReference type="SMR" id="P0C923"/>
<dbReference type="STRING" id="224326.BB_0649"/>
<dbReference type="PaxDb" id="224326-BB_0649"/>
<dbReference type="EnsemblBacteria" id="AAC66995">
    <property type="protein sequence ID" value="AAC66995"/>
    <property type="gene ID" value="BB_0649"/>
</dbReference>
<dbReference type="GeneID" id="56567459"/>
<dbReference type="KEGG" id="bbu:BB_0649"/>
<dbReference type="PATRIC" id="fig|224326.49.peg.1040"/>
<dbReference type="HOGENOM" id="CLU_016503_3_0_12"/>
<dbReference type="OrthoDB" id="9766614at2"/>
<dbReference type="Proteomes" id="UP000001807">
    <property type="component" value="Chromosome"/>
</dbReference>
<dbReference type="GO" id="GO:0005829">
    <property type="term" value="C:cytosol"/>
    <property type="evidence" value="ECO:0000314"/>
    <property type="project" value="CAFA"/>
</dbReference>
<dbReference type="GO" id="GO:0016020">
    <property type="term" value="C:membrane"/>
    <property type="evidence" value="ECO:0000314"/>
    <property type="project" value="CAFA"/>
</dbReference>
<dbReference type="GO" id="GO:0005524">
    <property type="term" value="F:ATP binding"/>
    <property type="evidence" value="ECO:0007669"/>
    <property type="project" value="UniProtKB-UniRule"/>
</dbReference>
<dbReference type="GO" id="GO:0140662">
    <property type="term" value="F:ATP-dependent protein folding chaperone"/>
    <property type="evidence" value="ECO:0007669"/>
    <property type="project" value="InterPro"/>
</dbReference>
<dbReference type="GO" id="GO:0016853">
    <property type="term" value="F:isomerase activity"/>
    <property type="evidence" value="ECO:0007669"/>
    <property type="project" value="UniProtKB-KW"/>
</dbReference>
<dbReference type="GO" id="GO:0051082">
    <property type="term" value="F:unfolded protein binding"/>
    <property type="evidence" value="ECO:0007669"/>
    <property type="project" value="UniProtKB-UniRule"/>
</dbReference>
<dbReference type="GO" id="GO:0042026">
    <property type="term" value="P:protein refolding"/>
    <property type="evidence" value="ECO:0007669"/>
    <property type="project" value="UniProtKB-UniRule"/>
</dbReference>
<dbReference type="CDD" id="cd03344">
    <property type="entry name" value="GroEL"/>
    <property type="match status" value="1"/>
</dbReference>
<dbReference type="FunFam" id="3.50.7.10:FF:000001">
    <property type="entry name" value="60 kDa chaperonin"/>
    <property type="match status" value="1"/>
</dbReference>
<dbReference type="Gene3D" id="3.50.7.10">
    <property type="entry name" value="GroEL"/>
    <property type="match status" value="1"/>
</dbReference>
<dbReference type="Gene3D" id="1.10.560.10">
    <property type="entry name" value="GroEL-like equatorial domain"/>
    <property type="match status" value="1"/>
</dbReference>
<dbReference type="Gene3D" id="3.30.260.10">
    <property type="entry name" value="TCP-1-like chaperonin intermediate domain"/>
    <property type="match status" value="1"/>
</dbReference>
<dbReference type="HAMAP" id="MF_00600">
    <property type="entry name" value="CH60"/>
    <property type="match status" value="1"/>
</dbReference>
<dbReference type="InterPro" id="IPR018370">
    <property type="entry name" value="Chaperonin_Cpn60_CS"/>
</dbReference>
<dbReference type="InterPro" id="IPR001844">
    <property type="entry name" value="Cpn60/GroEL"/>
</dbReference>
<dbReference type="InterPro" id="IPR002423">
    <property type="entry name" value="Cpn60/GroEL/TCP-1"/>
</dbReference>
<dbReference type="InterPro" id="IPR027409">
    <property type="entry name" value="GroEL-like_apical_dom_sf"/>
</dbReference>
<dbReference type="InterPro" id="IPR027413">
    <property type="entry name" value="GROEL-like_equatorial_sf"/>
</dbReference>
<dbReference type="InterPro" id="IPR027410">
    <property type="entry name" value="TCP-1-like_intermed_sf"/>
</dbReference>
<dbReference type="NCBIfam" id="TIGR02348">
    <property type="entry name" value="GroEL"/>
    <property type="match status" value="1"/>
</dbReference>
<dbReference type="NCBIfam" id="NF000592">
    <property type="entry name" value="PRK00013.1"/>
    <property type="match status" value="1"/>
</dbReference>
<dbReference type="NCBIfam" id="NF009487">
    <property type="entry name" value="PRK12849.1"/>
    <property type="match status" value="1"/>
</dbReference>
<dbReference type="NCBIfam" id="NF009488">
    <property type="entry name" value="PRK12850.1"/>
    <property type="match status" value="1"/>
</dbReference>
<dbReference type="NCBIfam" id="NF009489">
    <property type="entry name" value="PRK12851.1"/>
    <property type="match status" value="1"/>
</dbReference>
<dbReference type="PANTHER" id="PTHR45633">
    <property type="entry name" value="60 KDA HEAT SHOCK PROTEIN, MITOCHONDRIAL"/>
    <property type="match status" value="1"/>
</dbReference>
<dbReference type="Pfam" id="PF00118">
    <property type="entry name" value="Cpn60_TCP1"/>
    <property type="match status" value="1"/>
</dbReference>
<dbReference type="PRINTS" id="PR00298">
    <property type="entry name" value="CHAPERONIN60"/>
</dbReference>
<dbReference type="SUPFAM" id="SSF52029">
    <property type="entry name" value="GroEL apical domain-like"/>
    <property type="match status" value="1"/>
</dbReference>
<dbReference type="SUPFAM" id="SSF48592">
    <property type="entry name" value="GroEL equatorial domain-like"/>
    <property type="match status" value="1"/>
</dbReference>
<dbReference type="SUPFAM" id="SSF54849">
    <property type="entry name" value="GroEL-intermediate domain like"/>
    <property type="match status" value="1"/>
</dbReference>
<dbReference type="PROSITE" id="PS00296">
    <property type="entry name" value="CHAPERONINS_CPN60"/>
    <property type="match status" value="1"/>
</dbReference>
<evidence type="ECO:0000255" key="1">
    <source>
        <dbReference type="HAMAP-Rule" id="MF_00600"/>
    </source>
</evidence>
<evidence type="ECO:0000305" key="2"/>
<keyword id="KW-0067">ATP-binding</keyword>
<keyword id="KW-0143">Chaperone</keyword>
<keyword id="KW-0963">Cytoplasm</keyword>
<keyword id="KW-0413">Isomerase</keyword>
<keyword id="KW-0547">Nucleotide-binding</keyword>
<keyword id="KW-1185">Reference proteome</keyword>